<proteinExistence type="inferred from homology"/>
<name>TRMB_CLOK5</name>
<protein>
    <recommendedName>
        <fullName evidence="1">tRNA (guanine-N(7)-)-methyltransferase</fullName>
        <ecNumber evidence="1">2.1.1.33</ecNumber>
    </recommendedName>
    <alternativeName>
        <fullName evidence="1">tRNA (guanine(46)-N(7))-methyltransferase</fullName>
    </alternativeName>
    <alternativeName>
        <fullName evidence="1">tRNA(m7G46)-methyltransferase</fullName>
    </alternativeName>
</protein>
<accession>A5N127</accession>
<sequence>MRLRKKWWARPEMEASNLTIINPSLFKGKWKDEFKNDGEIYLELGCGRGKFLCTQALNNKHINYIGIDLKDEVLIYALKKVVEAEAENIRIIPMNISKIENVFDRDEVGRIYINFCNPWPKRRQKKRRLTHTGFLNIYKKFLKPKSEVWFKTDDRGLFEESQEYFVESGFSIDYITYDLHDSGFTDNVVTEYEEKFTNLGMKTMFLIARIV</sequence>
<dbReference type="EC" id="2.1.1.33" evidence="1"/>
<dbReference type="EMBL" id="CP000673">
    <property type="protein sequence ID" value="EDK34823.1"/>
    <property type="molecule type" value="Genomic_DNA"/>
</dbReference>
<dbReference type="RefSeq" id="WP_012103152.1">
    <property type="nucleotide sequence ID" value="NC_009706.1"/>
</dbReference>
<dbReference type="SMR" id="A5N127"/>
<dbReference type="STRING" id="431943.CKL_2811"/>
<dbReference type="KEGG" id="ckl:CKL_2811"/>
<dbReference type="eggNOG" id="COG0220">
    <property type="taxonomic scope" value="Bacteria"/>
</dbReference>
<dbReference type="HOGENOM" id="CLU_050910_2_1_9"/>
<dbReference type="UniPathway" id="UPA00989"/>
<dbReference type="Proteomes" id="UP000002411">
    <property type="component" value="Chromosome"/>
</dbReference>
<dbReference type="GO" id="GO:0043527">
    <property type="term" value="C:tRNA methyltransferase complex"/>
    <property type="evidence" value="ECO:0007669"/>
    <property type="project" value="TreeGrafter"/>
</dbReference>
<dbReference type="GO" id="GO:0008176">
    <property type="term" value="F:tRNA (guanine(46)-N7)-methyltransferase activity"/>
    <property type="evidence" value="ECO:0007669"/>
    <property type="project" value="UniProtKB-UniRule"/>
</dbReference>
<dbReference type="CDD" id="cd02440">
    <property type="entry name" value="AdoMet_MTases"/>
    <property type="match status" value="1"/>
</dbReference>
<dbReference type="Gene3D" id="3.40.50.150">
    <property type="entry name" value="Vaccinia Virus protein VP39"/>
    <property type="match status" value="1"/>
</dbReference>
<dbReference type="HAMAP" id="MF_01057">
    <property type="entry name" value="tRNA_methyltr_TrmB"/>
    <property type="match status" value="1"/>
</dbReference>
<dbReference type="InterPro" id="IPR029063">
    <property type="entry name" value="SAM-dependent_MTases_sf"/>
</dbReference>
<dbReference type="InterPro" id="IPR003358">
    <property type="entry name" value="tRNA_(Gua-N-7)_MeTrfase_Trmb"/>
</dbReference>
<dbReference type="InterPro" id="IPR055361">
    <property type="entry name" value="tRNA_methyltr_TrmB_bact"/>
</dbReference>
<dbReference type="NCBIfam" id="NF001080">
    <property type="entry name" value="PRK00121.2-2"/>
    <property type="match status" value="1"/>
</dbReference>
<dbReference type="NCBIfam" id="TIGR00091">
    <property type="entry name" value="tRNA (guanosine(46)-N7)-methyltransferase TrmB"/>
    <property type="match status" value="1"/>
</dbReference>
<dbReference type="PANTHER" id="PTHR23417">
    <property type="entry name" value="3-DEOXY-D-MANNO-OCTULOSONIC-ACID TRANSFERASE/TRNA GUANINE-N 7 - -METHYLTRANSFERASE"/>
    <property type="match status" value="1"/>
</dbReference>
<dbReference type="PANTHER" id="PTHR23417:SF14">
    <property type="entry name" value="PENTACOTRIPEPTIDE-REPEAT REGION OF PRORP DOMAIN-CONTAINING PROTEIN"/>
    <property type="match status" value="1"/>
</dbReference>
<dbReference type="Pfam" id="PF02390">
    <property type="entry name" value="Methyltransf_4"/>
    <property type="match status" value="1"/>
</dbReference>
<dbReference type="SUPFAM" id="SSF53335">
    <property type="entry name" value="S-adenosyl-L-methionine-dependent methyltransferases"/>
    <property type="match status" value="1"/>
</dbReference>
<dbReference type="PROSITE" id="PS51625">
    <property type="entry name" value="SAM_MT_TRMB"/>
    <property type="match status" value="1"/>
</dbReference>
<organism>
    <name type="scientific">Clostridium kluyveri (strain ATCC 8527 / DSM 555 / NBRC 12016 / NCIMB 10680 / K1)</name>
    <dbReference type="NCBI Taxonomy" id="431943"/>
    <lineage>
        <taxon>Bacteria</taxon>
        <taxon>Bacillati</taxon>
        <taxon>Bacillota</taxon>
        <taxon>Clostridia</taxon>
        <taxon>Eubacteriales</taxon>
        <taxon>Clostridiaceae</taxon>
        <taxon>Clostridium</taxon>
    </lineage>
</organism>
<gene>
    <name evidence="1" type="primary">trmB</name>
    <name type="ordered locus">CKL_2811</name>
</gene>
<comment type="function">
    <text evidence="1">Catalyzes the formation of N(7)-methylguanine at position 46 (m7G46) in tRNA.</text>
</comment>
<comment type="catalytic activity">
    <reaction evidence="1">
        <text>guanosine(46) in tRNA + S-adenosyl-L-methionine = N(7)-methylguanosine(46) in tRNA + S-adenosyl-L-homocysteine</text>
        <dbReference type="Rhea" id="RHEA:42708"/>
        <dbReference type="Rhea" id="RHEA-COMP:10188"/>
        <dbReference type="Rhea" id="RHEA-COMP:10189"/>
        <dbReference type="ChEBI" id="CHEBI:57856"/>
        <dbReference type="ChEBI" id="CHEBI:59789"/>
        <dbReference type="ChEBI" id="CHEBI:74269"/>
        <dbReference type="ChEBI" id="CHEBI:74480"/>
        <dbReference type="EC" id="2.1.1.33"/>
    </reaction>
</comment>
<comment type="pathway">
    <text evidence="1">tRNA modification; N(7)-methylguanine-tRNA biosynthesis.</text>
</comment>
<comment type="similarity">
    <text evidence="1">Belongs to the class I-like SAM-binding methyltransferase superfamily. TrmB family.</text>
</comment>
<keyword id="KW-0489">Methyltransferase</keyword>
<keyword id="KW-1185">Reference proteome</keyword>
<keyword id="KW-0949">S-adenosyl-L-methionine</keyword>
<keyword id="KW-0808">Transferase</keyword>
<keyword id="KW-0819">tRNA processing</keyword>
<feature type="chain" id="PRO_1000084439" description="tRNA (guanine-N(7)-)-methyltransferase">
    <location>
        <begin position="1"/>
        <end position="211"/>
    </location>
</feature>
<feature type="binding site" evidence="1">
    <location>
        <position position="43"/>
    </location>
    <ligand>
        <name>S-adenosyl-L-methionine</name>
        <dbReference type="ChEBI" id="CHEBI:59789"/>
    </ligand>
</feature>
<feature type="binding site" evidence="1">
    <location>
        <position position="68"/>
    </location>
    <ligand>
        <name>S-adenosyl-L-methionine</name>
        <dbReference type="ChEBI" id="CHEBI:59789"/>
    </ligand>
</feature>
<feature type="binding site" evidence="1">
    <location>
        <position position="95"/>
    </location>
    <ligand>
        <name>S-adenosyl-L-methionine</name>
        <dbReference type="ChEBI" id="CHEBI:59789"/>
    </ligand>
</feature>
<feature type="binding site" evidence="1">
    <location>
        <position position="117"/>
    </location>
    <ligand>
        <name>S-adenosyl-L-methionine</name>
        <dbReference type="ChEBI" id="CHEBI:59789"/>
    </ligand>
</feature>
<feature type="binding site" evidence="1">
    <location>
        <position position="121"/>
    </location>
    <ligand>
        <name>substrate</name>
    </ligand>
</feature>
<feature type="binding site" evidence="1">
    <location>
        <position position="153"/>
    </location>
    <ligand>
        <name>substrate</name>
    </ligand>
</feature>
<feature type="binding site" evidence="1">
    <location>
        <begin position="190"/>
        <end position="193"/>
    </location>
    <ligand>
        <name>substrate</name>
    </ligand>
</feature>
<reference key="1">
    <citation type="journal article" date="2008" name="Proc. Natl. Acad. Sci. U.S.A.">
        <title>The genome of Clostridium kluyveri, a strict anaerobe with unique metabolic features.</title>
        <authorList>
            <person name="Seedorf H."/>
            <person name="Fricke W.F."/>
            <person name="Veith B."/>
            <person name="Brueggemann H."/>
            <person name="Liesegang H."/>
            <person name="Strittmatter A."/>
            <person name="Miethke M."/>
            <person name="Buckel W."/>
            <person name="Hinderberger J."/>
            <person name="Li F."/>
            <person name="Hagemeier C."/>
            <person name="Thauer R.K."/>
            <person name="Gottschalk G."/>
        </authorList>
    </citation>
    <scope>NUCLEOTIDE SEQUENCE [LARGE SCALE GENOMIC DNA]</scope>
    <source>
        <strain>ATCC 8527 / DSM 555 / NBRC 12016 / NCIMB 10680 / K1</strain>
    </source>
</reference>
<evidence type="ECO:0000255" key="1">
    <source>
        <dbReference type="HAMAP-Rule" id="MF_01057"/>
    </source>
</evidence>